<evidence type="ECO:0000255" key="1">
    <source>
        <dbReference type="HAMAP-Rule" id="MF_01210"/>
    </source>
</evidence>
<protein>
    <recommendedName>
        <fullName evidence="1">Carbamoyl phosphate synthase large chain</fullName>
        <ecNumber evidence="1">6.3.4.16</ecNumber>
        <ecNumber evidence="1">6.3.5.5</ecNumber>
    </recommendedName>
    <alternativeName>
        <fullName evidence="1">Carbamoyl phosphate synthetase ammonia chain</fullName>
    </alternativeName>
</protein>
<sequence length="1057" mass="117300">MPKRNDIKTILVIGSGPIIIGQAAEFDYAGTQACLALKEEGYKVILVNSNPATIMTDTEIADKVYIEPLTLDFVSRIIRKEQPDALLPTLGGQTGLNMAVQLHEAGILEENNVTLLGTKLSSIEQAEDRDLFRNLMNELNEPVPESDIVNTVQQAIDFATSIGYPVIVRPAFTMGGTGGGICHDEKELVEIVTNGLKYSPVTQCLIEKSIAGYKEIEYEVMRDSNDNAIVVCNMENIDPVGIHTGDSIVVAPSQTLTDKEYHMLRDVSLKIIRALGIEGGCNVQLALDPHSFNYYIIEVNPRVSRSSALASKATGYPIAKLAAKIAVGLTLDEMMNPVTGTSYAAFEPALDYVVSKIPRFPFDKFEKGERVLGTQMKATGEVMAIGRTYEESLLKAIRSLEYGVHHLGLPNGEAFELDFIKQRIGEQDDERLFFIGEAIRRGVTLEEIHEMTQIDYFFLNKFQHIIDIEHDLKDNVGDIDHLIWAKKYGFSDKVIAHRWNMTEKEIYDIRHENHILPVYKMVDTCASEFESNTPYFYGTYETENESIRSDKKKVVVLGSGPIRIGQGVEFDYATVHAVWAIREAGYEAIIINNNPETVSTDFSISDKLYFEPLTEEDVMNIINLEQPEGVVVQFGGQTAINLAEKLTKYGVKVLGTSLENLDRAEDRKEFEALMQRIEIPQPLGKTATSVEEAVANADFIGYPVLVRPSYVLGGRAMEIVYNEEELINYMTQAVKASPEHPVLIDRYLTGKEIEVDAICDGETVVIPGIMEHIERAGVHSGDSIAVYPPQTLTEKQIATLEDYTKRLAHGLEIKGLLNIQYVISNDEVFVLEVNPRASRTVPFLSKITDVPMANLAMKAILGESLISKGYKDGLVPYKEGVYVKAPVFSFSKLKNVDITLGPEMKSTGEVMGKDITLEKALYKGLVASGLQVKDHGTVLITVADKDKAEALGLAKRFHEVGYRIMATSGTAKLLKENDIPVVEVSKIGNEFNLLDVIRDGHVQIVINTMTKGKQIERDGFQIRRDSVDNGVPCLTSLDTARALLEVIESMTFNMNQM</sequence>
<keyword id="KW-0028">Amino-acid biosynthesis</keyword>
<keyword id="KW-0055">Arginine biosynthesis</keyword>
<keyword id="KW-0067">ATP-binding</keyword>
<keyword id="KW-0436">Ligase</keyword>
<keyword id="KW-0460">Magnesium</keyword>
<keyword id="KW-0464">Manganese</keyword>
<keyword id="KW-0479">Metal-binding</keyword>
<keyword id="KW-0547">Nucleotide-binding</keyword>
<keyword id="KW-0665">Pyrimidine biosynthesis</keyword>
<keyword id="KW-1185">Reference proteome</keyword>
<keyword id="KW-0677">Repeat</keyword>
<proteinExistence type="inferred from homology"/>
<organism>
    <name type="scientific">Macrococcus caseolyticus (strain JCSC5402)</name>
    <name type="common">Macrococcoides caseolyticum</name>
    <dbReference type="NCBI Taxonomy" id="458233"/>
    <lineage>
        <taxon>Bacteria</taxon>
        <taxon>Bacillati</taxon>
        <taxon>Bacillota</taxon>
        <taxon>Bacilli</taxon>
        <taxon>Bacillales</taxon>
        <taxon>Staphylococcaceae</taxon>
        <taxon>Macrococcoides</taxon>
    </lineage>
</organism>
<gene>
    <name evidence="1" type="primary">carB</name>
    <name type="ordered locus">MCCL_0773</name>
</gene>
<comment type="function">
    <text evidence="1">Large subunit of the glutamine-dependent carbamoyl phosphate synthetase (CPSase). CPSase catalyzes the formation of carbamoyl phosphate from the ammonia moiety of glutamine, carbonate, and phosphate donated by ATP, constituting the first step of 2 biosynthetic pathways, one leading to arginine and/or urea and the other to pyrimidine nucleotides. The large subunit (synthetase) binds the substrates ammonia (free or transferred from glutamine from the small subunit), hydrogencarbonate and ATP and carries out an ATP-coupled ligase reaction, activating hydrogencarbonate by forming carboxy phosphate which reacts with ammonia to form carbamoyl phosphate.</text>
</comment>
<comment type="catalytic activity">
    <reaction evidence="1">
        <text>hydrogencarbonate + L-glutamine + 2 ATP + H2O = carbamoyl phosphate + L-glutamate + 2 ADP + phosphate + 2 H(+)</text>
        <dbReference type="Rhea" id="RHEA:18633"/>
        <dbReference type="ChEBI" id="CHEBI:15377"/>
        <dbReference type="ChEBI" id="CHEBI:15378"/>
        <dbReference type="ChEBI" id="CHEBI:17544"/>
        <dbReference type="ChEBI" id="CHEBI:29985"/>
        <dbReference type="ChEBI" id="CHEBI:30616"/>
        <dbReference type="ChEBI" id="CHEBI:43474"/>
        <dbReference type="ChEBI" id="CHEBI:58228"/>
        <dbReference type="ChEBI" id="CHEBI:58359"/>
        <dbReference type="ChEBI" id="CHEBI:456216"/>
        <dbReference type="EC" id="6.3.5.5"/>
    </reaction>
</comment>
<comment type="catalytic activity">
    <molecule>Carbamoyl phosphate synthase large chain</molecule>
    <reaction evidence="1">
        <text>hydrogencarbonate + NH4(+) + 2 ATP = carbamoyl phosphate + 2 ADP + phosphate + 2 H(+)</text>
        <dbReference type="Rhea" id="RHEA:18029"/>
        <dbReference type="ChEBI" id="CHEBI:15378"/>
        <dbReference type="ChEBI" id="CHEBI:17544"/>
        <dbReference type="ChEBI" id="CHEBI:28938"/>
        <dbReference type="ChEBI" id="CHEBI:30616"/>
        <dbReference type="ChEBI" id="CHEBI:43474"/>
        <dbReference type="ChEBI" id="CHEBI:58228"/>
        <dbReference type="ChEBI" id="CHEBI:456216"/>
        <dbReference type="EC" id="6.3.4.16"/>
    </reaction>
</comment>
<comment type="cofactor">
    <cofactor evidence="1">
        <name>Mg(2+)</name>
        <dbReference type="ChEBI" id="CHEBI:18420"/>
    </cofactor>
    <cofactor evidence="1">
        <name>Mn(2+)</name>
        <dbReference type="ChEBI" id="CHEBI:29035"/>
    </cofactor>
    <text evidence="1">Binds 4 Mg(2+) or Mn(2+) ions per subunit.</text>
</comment>
<comment type="pathway">
    <text evidence="1">Amino-acid biosynthesis; L-arginine biosynthesis; carbamoyl phosphate from bicarbonate: step 1/1.</text>
</comment>
<comment type="pathway">
    <text evidence="1">Pyrimidine metabolism; UMP biosynthesis via de novo pathway; (S)-dihydroorotate from bicarbonate: step 1/3.</text>
</comment>
<comment type="subunit">
    <text evidence="1">Composed of two chains; the small (or glutamine) chain promotes the hydrolysis of glutamine to ammonia, which is used by the large (or ammonia) chain to synthesize carbamoyl phosphate. Tetramer of heterodimers (alpha,beta)4.</text>
</comment>
<comment type="domain">
    <text evidence="1">The large subunit is composed of 2 ATP-grasp domains that are involved in binding the 2 ATP molecules needed for carbamoyl phosphate synthesis. The N-terminal ATP-grasp domain (referred to as the carboxyphosphate synthetic component) catalyzes the ATP-dependent phosphorylation of hydrogencarbonate to carboxyphosphate and the subsequent nucleophilic attack by ammonia to form a carbamate intermediate. The C-terminal ATP-grasp domain (referred to as the carbamoyl phosphate synthetic component) then catalyzes the phosphorylation of carbamate with the second ATP to form the end product carbamoyl phosphate. The reactive and unstable enzyme intermediates are sequentially channeled from one active site to the next through the interior of the protein over a distance of at least 96 A.</text>
</comment>
<comment type="similarity">
    <text evidence="1">Belongs to the CarB family.</text>
</comment>
<feature type="chain" id="PRO_1000164712" description="Carbamoyl phosphate synthase large chain">
    <location>
        <begin position="1"/>
        <end position="1057"/>
    </location>
</feature>
<feature type="domain" description="ATP-grasp 1" evidence="1">
    <location>
        <begin position="133"/>
        <end position="327"/>
    </location>
</feature>
<feature type="domain" description="ATP-grasp 2" evidence="1">
    <location>
        <begin position="671"/>
        <end position="861"/>
    </location>
</feature>
<feature type="domain" description="MGS-like" evidence="1">
    <location>
        <begin position="930"/>
        <end position="1057"/>
    </location>
</feature>
<feature type="region of interest" description="Carboxyphosphate synthetic domain" evidence="1">
    <location>
        <begin position="1"/>
        <end position="401"/>
    </location>
</feature>
<feature type="region of interest" description="Oligomerization domain" evidence="1">
    <location>
        <begin position="402"/>
        <end position="546"/>
    </location>
</feature>
<feature type="region of interest" description="Carbamoyl phosphate synthetic domain" evidence="1">
    <location>
        <begin position="547"/>
        <end position="929"/>
    </location>
</feature>
<feature type="region of interest" description="Allosteric domain" evidence="1">
    <location>
        <begin position="930"/>
        <end position="1057"/>
    </location>
</feature>
<feature type="binding site" evidence="1">
    <location>
        <position position="129"/>
    </location>
    <ligand>
        <name>ATP</name>
        <dbReference type="ChEBI" id="CHEBI:30616"/>
        <label>1</label>
    </ligand>
</feature>
<feature type="binding site" evidence="1">
    <location>
        <position position="169"/>
    </location>
    <ligand>
        <name>ATP</name>
        <dbReference type="ChEBI" id="CHEBI:30616"/>
        <label>1</label>
    </ligand>
</feature>
<feature type="binding site" evidence="1">
    <location>
        <position position="175"/>
    </location>
    <ligand>
        <name>ATP</name>
        <dbReference type="ChEBI" id="CHEBI:30616"/>
        <label>1</label>
    </ligand>
</feature>
<feature type="binding site" evidence="1">
    <location>
        <position position="176"/>
    </location>
    <ligand>
        <name>ATP</name>
        <dbReference type="ChEBI" id="CHEBI:30616"/>
        <label>1</label>
    </ligand>
</feature>
<feature type="binding site" evidence="1">
    <location>
        <position position="208"/>
    </location>
    <ligand>
        <name>ATP</name>
        <dbReference type="ChEBI" id="CHEBI:30616"/>
        <label>1</label>
    </ligand>
</feature>
<feature type="binding site" evidence="1">
    <location>
        <position position="210"/>
    </location>
    <ligand>
        <name>ATP</name>
        <dbReference type="ChEBI" id="CHEBI:30616"/>
        <label>1</label>
    </ligand>
</feature>
<feature type="binding site" evidence="1">
    <location>
        <position position="215"/>
    </location>
    <ligand>
        <name>ATP</name>
        <dbReference type="ChEBI" id="CHEBI:30616"/>
        <label>1</label>
    </ligand>
</feature>
<feature type="binding site" evidence="1">
    <location>
        <position position="241"/>
    </location>
    <ligand>
        <name>ATP</name>
        <dbReference type="ChEBI" id="CHEBI:30616"/>
        <label>1</label>
    </ligand>
</feature>
<feature type="binding site" evidence="1">
    <location>
        <position position="242"/>
    </location>
    <ligand>
        <name>ATP</name>
        <dbReference type="ChEBI" id="CHEBI:30616"/>
        <label>1</label>
    </ligand>
</feature>
<feature type="binding site" evidence="1">
    <location>
        <position position="243"/>
    </location>
    <ligand>
        <name>ATP</name>
        <dbReference type="ChEBI" id="CHEBI:30616"/>
        <label>1</label>
    </ligand>
</feature>
<feature type="binding site" evidence="1">
    <location>
        <position position="284"/>
    </location>
    <ligand>
        <name>ATP</name>
        <dbReference type="ChEBI" id="CHEBI:30616"/>
        <label>1</label>
    </ligand>
</feature>
<feature type="binding site" evidence="1">
    <location>
        <position position="284"/>
    </location>
    <ligand>
        <name>Mg(2+)</name>
        <dbReference type="ChEBI" id="CHEBI:18420"/>
        <label>1</label>
    </ligand>
</feature>
<feature type="binding site" evidence="1">
    <location>
        <position position="284"/>
    </location>
    <ligand>
        <name>Mn(2+)</name>
        <dbReference type="ChEBI" id="CHEBI:29035"/>
        <label>1</label>
    </ligand>
</feature>
<feature type="binding site" evidence="1">
    <location>
        <position position="298"/>
    </location>
    <ligand>
        <name>ATP</name>
        <dbReference type="ChEBI" id="CHEBI:30616"/>
        <label>1</label>
    </ligand>
</feature>
<feature type="binding site" evidence="1">
    <location>
        <position position="298"/>
    </location>
    <ligand>
        <name>Mg(2+)</name>
        <dbReference type="ChEBI" id="CHEBI:18420"/>
        <label>1</label>
    </ligand>
</feature>
<feature type="binding site" evidence="1">
    <location>
        <position position="298"/>
    </location>
    <ligand>
        <name>Mg(2+)</name>
        <dbReference type="ChEBI" id="CHEBI:18420"/>
        <label>2</label>
    </ligand>
</feature>
<feature type="binding site" evidence="1">
    <location>
        <position position="298"/>
    </location>
    <ligand>
        <name>Mn(2+)</name>
        <dbReference type="ChEBI" id="CHEBI:29035"/>
        <label>1</label>
    </ligand>
</feature>
<feature type="binding site" evidence="1">
    <location>
        <position position="298"/>
    </location>
    <ligand>
        <name>Mn(2+)</name>
        <dbReference type="ChEBI" id="CHEBI:29035"/>
        <label>2</label>
    </ligand>
</feature>
<feature type="binding site" evidence="1">
    <location>
        <position position="300"/>
    </location>
    <ligand>
        <name>Mg(2+)</name>
        <dbReference type="ChEBI" id="CHEBI:18420"/>
        <label>2</label>
    </ligand>
</feature>
<feature type="binding site" evidence="1">
    <location>
        <position position="300"/>
    </location>
    <ligand>
        <name>Mn(2+)</name>
        <dbReference type="ChEBI" id="CHEBI:29035"/>
        <label>2</label>
    </ligand>
</feature>
<feature type="binding site" evidence="1">
    <location>
        <position position="707"/>
    </location>
    <ligand>
        <name>ATP</name>
        <dbReference type="ChEBI" id="CHEBI:30616"/>
        <label>2</label>
    </ligand>
</feature>
<feature type="binding site" evidence="1">
    <location>
        <position position="746"/>
    </location>
    <ligand>
        <name>ATP</name>
        <dbReference type="ChEBI" id="CHEBI:30616"/>
        <label>2</label>
    </ligand>
</feature>
<feature type="binding site" evidence="1">
    <location>
        <position position="748"/>
    </location>
    <ligand>
        <name>ATP</name>
        <dbReference type="ChEBI" id="CHEBI:30616"/>
        <label>2</label>
    </ligand>
</feature>
<feature type="binding site" evidence="1">
    <location>
        <position position="752"/>
    </location>
    <ligand>
        <name>ATP</name>
        <dbReference type="ChEBI" id="CHEBI:30616"/>
        <label>2</label>
    </ligand>
</feature>
<feature type="binding site" evidence="1">
    <location>
        <position position="777"/>
    </location>
    <ligand>
        <name>ATP</name>
        <dbReference type="ChEBI" id="CHEBI:30616"/>
        <label>2</label>
    </ligand>
</feature>
<feature type="binding site" evidence="1">
    <location>
        <position position="778"/>
    </location>
    <ligand>
        <name>ATP</name>
        <dbReference type="ChEBI" id="CHEBI:30616"/>
        <label>2</label>
    </ligand>
</feature>
<feature type="binding site" evidence="1">
    <location>
        <position position="779"/>
    </location>
    <ligand>
        <name>ATP</name>
        <dbReference type="ChEBI" id="CHEBI:30616"/>
        <label>2</label>
    </ligand>
</feature>
<feature type="binding site" evidence="1">
    <location>
        <position position="780"/>
    </location>
    <ligand>
        <name>ATP</name>
        <dbReference type="ChEBI" id="CHEBI:30616"/>
        <label>2</label>
    </ligand>
</feature>
<feature type="binding site" evidence="1">
    <location>
        <position position="820"/>
    </location>
    <ligand>
        <name>ATP</name>
        <dbReference type="ChEBI" id="CHEBI:30616"/>
        <label>2</label>
    </ligand>
</feature>
<feature type="binding site" evidence="1">
    <location>
        <position position="820"/>
    </location>
    <ligand>
        <name>Mg(2+)</name>
        <dbReference type="ChEBI" id="CHEBI:18420"/>
        <label>3</label>
    </ligand>
</feature>
<feature type="binding site" evidence="1">
    <location>
        <position position="820"/>
    </location>
    <ligand>
        <name>Mn(2+)</name>
        <dbReference type="ChEBI" id="CHEBI:29035"/>
        <label>3</label>
    </ligand>
</feature>
<feature type="binding site" evidence="1">
    <location>
        <position position="832"/>
    </location>
    <ligand>
        <name>ATP</name>
        <dbReference type="ChEBI" id="CHEBI:30616"/>
        <label>2</label>
    </ligand>
</feature>
<feature type="binding site" evidence="1">
    <location>
        <position position="832"/>
    </location>
    <ligand>
        <name>Mg(2+)</name>
        <dbReference type="ChEBI" id="CHEBI:18420"/>
        <label>3</label>
    </ligand>
</feature>
<feature type="binding site" evidence="1">
    <location>
        <position position="832"/>
    </location>
    <ligand>
        <name>Mg(2+)</name>
        <dbReference type="ChEBI" id="CHEBI:18420"/>
        <label>4</label>
    </ligand>
</feature>
<feature type="binding site" evidence="1">
    <location>
        <position position="832"/>
    </location>
    <ligand>
        <name>Mn(2+)</name>
        <dbReference type="ChEBI" id="CHEBI:29035"/>
        <label>3</label>
    </ligand>
</feature>
<feature type="binding site" evidence="1">
    <location>
        <position position="832"/>
    </location>
    <ligand>
        <name>Mn(2+)</name>
        <dbReference type="ChEBI" id="CHEBI:29035"/>
        <label>4</label>
    </ligand>
</feature>
<feature type="binding site" evidence="1">
    <location>
        <position position="834"/>
    </location>
    <ligand>
        <name>Mg(2+)</name>
        <dbReference type="ChEBI" id="CHEBI:18420"/>
        <label>4</label>
    </ligand>
</feature>
<feature type="binding site" evidence="1">
    <location>
        <position position="834"/>
    </location>
    <ligand>
        <name>Mn(2+)</name>
        <dbReference type="ChEBI" id="CHEBI:29035"/>
        <label>4</label>
    </ligand>
</feature>
<accession>B9EB69</accession>
<reference key="1">
    <citation type="journal article" date="2009" name="J. Bacteriol.">
        <title>Complete genome sequence of Macrococcus caseolyticus strain JCSCS5402, reflecting the ancestral genome of the human-pathogenic staphylococci.</title>
        <authorList>
            <person name="Baba T."/>
            <person name="Kuwahara-Arai K."/>
            <person name="Uchiyama I."/>
            <person name="Takeuchi F."/>
            <person name="Ito T."/>
            <person name="Hiramatsu K."/>
        </authorList>
    </citation>
    <scope>NUCLEOTIDE SEQUENCE [LARGE SCALE GENOMIC DNA]</scope>
    <source>
        <strain>JCSC5402</strain>
    </source>
</reference>
<name>CARB_MACCJ</name>
<dbReference type="EC" id="6.3.4.16" evidence="1"/>
<dbReference type="EC" id="6.3.5.5" evidence="1"/>
<dbReference type="EMBL" id="AP009484">
    <property type="protein sequence ID" value="BAH17480.1"/>
    <property type="molecule type" value="Genomic_DNA"/>
</dbReference>
<dbReference type="RefSeq" id="WP_012656680.1">
    <property type="nucleotide sequence ID" value="NC_011999.1"/>
</dbReference>
<dbReference type="SMR" id="B9EB69"/>
<dbReference type="STRING" id="458233.MCCL_0773"/>
<dbReference type="KEGG" id="mcl:MCCL_0773"/>
<dbReference type="eggNOG" id="COG0458">
    <property type="taxonomic scope" value="Bacteria"/>
</dbReference>
<dbReference type="HOGENOM" id="CLU_000513_1_3_9"/>
<dbReference type="OrthoDB" id="9804197at2"/>
<dbReference type="UniPathway" id="UPA00068">
    <property type="reaction ID" value="UER00171"/>
</dbReference>
<dbReference type="UniPathway" id="UPA00070">
    <property type="reaction ID" value="UER00115"/>
</dbReference>
<dbReference type="Proteomes" id="UP000001383">
    <property type="component" value="Chromosome"/>
</dbReference>
<dbReference type="GO" id="GO:0005737">
    <property type="term" value="C:cytoplasm"/>
    <property type="evidence" value="ECO:0007669"/>
    <property type="project" value="TreeGrafter"/>
</dbReference>
<dbReference type="GO" id="GO:0005524">
    <property type="term" value="F:ATP binding"/>
    <property type="evidence" value="ECO:0007669"/>
    <property type="project" value="UniProtKB-UniRule"/>
</dbReference>
<dbReference type="GO" id="GO:0004087">
    <property type="term" value="F:carbamoyl-phosphate synthase (ammonia) activity"/>
    <property type="evidence" value="ECO:0007669"/>
    <property type="project" value="RHEA"/>
</dbReference>
<dbReference type="GO" id="GO:0004088">
    <property type="term" value="F:carbamoyl-phosphate synthase (glutamine-hydrolyzing) activity"/>
    <property type="evidence" value="ECO:0007669"/>
    <property type="project" value="UniProtKB-UniRule"/>
</dbReference>
<dbReference type="GO" id="GO:0046872">
    <property type="term" value="F:metal ion binding"/>
    <property type="evidence" value="ECO:0007669"/>
    <property type="project" value="UniProtKB-KW"/>
</dbReference>
<dbReference type="GO" id="GO:0044205">
    <property type="term" value="P:'de novo' UMP biosynthetic process"/>
    <property type="evidence" value="ECO:0007669"/>
    <property type="project" value="UniProtKB-UniRule"/>
</dbReference>
<dbReference type="GO" id="GO:0006541">
    <property type="term" value="P:glutamine metabolic process"/>
    <property type="evidence" value="ECO:0007669"/>
    <property type="project" value="TreeGrafter"/>
</dbReference>
<dbReference type="GO" id="GO:0006526">
    <property type="term" value="P:L-arginine biosynthetic process"/>
    <property type="evidence" value="ECO:0007669"/>
    <property type="project" value="UniProtKB-UniRule"/>
</dbReference>
<dbReference type="CDD" id="cd01424">
    <property type="entry name" value="MGS_CPS_II"/>
    <property type="match status" value="1"/>
</dbReference>
<dbReference type="FunFam" id="1.10.1030.10:FF:000002">
    <property type="entry name" value="Carbamoyl-phosphate synthase large chain"/>
    <property type="match status" value="1"/>
</dbReference>
<dbReference type="FunFam" id="3.30.1490.20:FF:000001">
    <property type="entry name" value="Carbamoyl-phosphate synthase large chain"/>
    <property type="match status" value="1"/>
</dbReference>
<dbReference type="FunFam" id="3.30.470.20:FF:000001">
    <property type="entry name" value="Carbamoyl-phosphate synthase large chain"/>
    <property type="match status" value="1"/>
</dbReference>
<dbReference type="FunFam" id="3.30.470.20:FF:000026">
    <property type="entry name" value="Carbamoyl-phosphate synthase large chain"/>
    <property type="match status" value="1"/>
</dbReference>
<dbReference type="FunFam" id="3.40.50.1380:FF:000011">
    <property type="entry name" value="Carbamoyl-phosphate synthase large chain"/>
    <property type="match status" value="1"/>
</dbReference>
<dbReference type="FunFam" id="3.40.50.20:FF:000001">
    <property type="entry name" value="Carbamoyl-phosphate synthase large chain"/>
    <property type="match status" value="2"/>
</dbReference>
<dbReference type="Gene3D" id="3.40.50.20">
    <property type="match status" value="2"/>
</dbReference>
<dbReference type="Gene3D" id="3.30.1490.20">
    <property type="entry name" value="ATP-grasp fold, A domain"/>
    <property type="match status" value="1"/>
</dbReference>
<dbReference type="Gene3D" id="3.30.470.20">
    <property type="entry name" value="ATP-grasp fold, B domain"/>
    <property type="match status" value="2"/>
</dbReference>
<dbReference type="Gene3D" id="1.10.1030.10">
    <property type="entry name" value="Carbamoyl-phosphate synthetase, large subunit oligomerisation domain"/>
    <property type="match status" value="1"/>
</dbReference>
<dbReference type="Gene3D" id="3.40.50.1380">
    <property type="entry name" value="Methylglyoxal synthase-like domain"/>
    <property type="match status" value="1"/>
</dbReference>
<dbReference type="HAMAP" id="MF_01210_A">
    <property type="entry name" value="CPSase_L_chain_A"/>
    <property type="match status" value="1"/>
</dbReference>
<dbReference type="HAMAP" id="MF_01210_B">
    <property type="entry name" value="CPSase_L_chain_B"/>
    <property type="match status" value="1"/>
</dbReference>
<dbReference type="InterPro" id="IPR011761">
    <property type="entry name" value="ATP-grasp"/>
</dbReference>
<dbReference type="InterPro" id="IPR013815">
    <property type="entry name" value="ATP_grasp_subdomain_1"/>
</dbReference>
<dbReference type="InterPro" id="IPR006275">
    <property type="entry name" value="CarbamoylP_synth_lsu"/>
</dbReference>
<dbReference type="InterPro" id="IPR005480">
    <property type="entry name" value="CarbamoylP_synth_lsu_oligo"/>
</dbReference>
<dbReference type="InterPro" id="IPR036897">
    <property type="entry name" value="CarbamoylP_synth_lsu_oligo_sf"/>
</dbReference>
<dbReference type="InterPro" id="IPR005479">
    <property type="entry name" value="CbamoylP_synth_lsu-like_ATP-bd"/>
</dbReference>
<dbReference type="InterPro" id="IPR005483">
    <property type="entry name" value="CbamoylP_synth_lsu_CPSase_dom"/>
</dbReference>
<dbReference type="InterPro" id="IPR011607">
    <property type="entry name" value="MGS-like_dom"/>
</dbReference>
<dbReference type="InterPro" id="IPR036914">
    <property type="entry name" value="MGS-like_dom_sf"/>
</dbReference>
<dbReference type="InterPro" id="IPR033937">
    <property type="entry name" value="MGS_CPS_CarB"/>
</dbReference>
<dbReference type="InterPro" id="IPR016185">
    <property type="entry name" value="PreATP-grasp_dom_sf"/>
</dbReference>
<dbReference type="NCBIfam" id="TIGR01369">
    <property type="entry name" value="CPSaseII_lrg"/>
    <property type="match status" value="1"/>
</dbReference>
<dbReference type="NCBIfam" id="NF003671">
    <property type="entry name" value="PRK05294.1"/>
    <property type="match status" value="1"/>
</dbReference>
<dbReference type="NCBIfam" id="NF009455">
    <property type="entry name" value="PRK12815.1"/>
    <property type="match status" value="1"/>
</dbReference>
<dbReference type="PANTHER" id="PTHR11405:SF53">
    <property type="entry name" value="CARBAMOYL-PHOSPHATE SYNTHASE [AMMONIA], MITOCHONDRIAL"/>
    <property type="match status" value="1"/>
</dbReference>
<dbReference type="PANTHER" id="PTHR11405">
    <property type="entry name" value="CARBAMOYLTRANSFERASE FAMILY MEMBER"/>
    <property type="match status" value="1"/>
</dbReference>
<dbReference type="Pfam" id="PF02786">
    <property type="entry name" value="CPSase_L_D2"/>
    <property type="match status" value="2"/>
</dbReference>
<dbReference type="Pfam" id="PF02787">
    <property type="entry name" value="CPSase_L_D3"/>
    <property type="match status" value="1"/>
</dbReference>
<dbReference type="Pfam" id="PF02142">
    <property type="entry name" value="MGS"/>
    <property type="match status" value="1"/>
</dbReference>
<dbReference type="PRINTS" id="PR00098">
    <property type="entry name" value="CPSASE"/>
</dbReference>
<dbReference type="SMART" id="SM01096">
    <property type="entry name" value="CPSase_L_D3"/>
    <property type="match status" value="1"/>
</dbReference>
<dbReference type="SMART" id="SM01209">
    <property type="entry name" value="GARS_A"/>
    <property type="match status" value="1"/>
</dbReference>
<dbReference type="SMART" id="SM00851">
    <property type="entry name" value="MGS"/>
    <property type="match status" value="1"/>
</dbReference>
<dbReference type="SUPFAM" id="SSF48108">
    <property type="entry name" value="Carbamoyl phosphate synthetase, large subunit connection domain"/>
    <property type="match status" value="1"/>
</dbReference>
<dbReference type="SUPFAM" id="SSF56059">
    <property type="entry name" value="Glutathione synthetase ATP-binding domain-like"/>
    <property type="match status" value="2"/>
</dbReference>
<dbReference type="SUPFAM" id="SSF52335">
    <property type="entry name" value="Methylglyoxal synthase-like"/>
    <property type="match status" value="1"/>
</dbReference>
<dbReference type="SUPFAM" id="SSF52440">
    <property type="entry name" value="PreATP-grasp domain"/>
    <property type="match status" value="2"/>
</dbReference>
<dbReference type="PROSITE" id="PS50975">
    <property type="entry name" value="ATP_GRASP"/>
    <property type="match status" value="2"/>
</dbReference>
<dbReference type="PROSITE" id="PS00866">
    <property type="entry name" value="CPSASE_1"/>
    <property type="match status" value="2"/>
</dbReference>
<dbReference type="PROSITE" id="PS00867">
    <property type="entry name" value="CPSASE_2"/>
    <property type="match status" value="2"/>
</dbReference>
<dbReference type="PROSITE" id="PS51855">
    <property type="entry name" value="MGS"/>
    <property type="match status" value="1"/>
</dbReference>